<reference evidence="9" key="1">
    <citation type="journal article" date="1997" name="Gene">
        <title>The 5'-upstream region of the rat phospholipase C-beta 3 gene contains two critical Sp1 sites and an HIV Inr-like element.</title>
        <authorList>
            <person name="Kang J.S."/>
            <person name="Lee H.B."/>
            <person name="Rhee S.G."/>
            <person name="Park K."/>
            <person name="Yoo O.J."/>
        </authorList>
    </citation>
    <scope>NUCLEOTIDE SEQUENCE [GENOMIC DNA] OF 1-33</scope>
</reference>
<reference evidence="9" key="2">
    <citation type="journal article" date="1993" name="J. Biol. Chem.">
        <title>Cloning, sequencing, purification, and Gq-dependent activation of phospholipase C-beta 3.</title>
        <authorList>
            <person name="Jhon D.-Y."/>
            <person name="Lee H.-H."/>
            <person name="Park D."/>
            <person name="Lee C.-W."/>
            <person name="Lee K.-H."/>
            <person name="Yoo O.J."/>
            <person name="Rhee S.G."/>
        </authorList>
    </citation>
    <scope>NUCLEOTIDE SEQUENCE [MRNA] OF 17-1234</scope>
    <scope>FUNCTION</scope>
    <scope>TISSUE SPECIFICITY</scope>
    <scope>SUBCELLULAR LOCATION</scope>
    <scope>CATALYTIC ACTIVITY</scope>
    <source>
        <strain>Fischer</strain>
        <tissue>Thyroid</tissue>
    </source>
</reference>
<reference key="3">
    <citation type="journal article" date="2005" name="J. Biol. Chem.">
        <title>The interaction of phospholipase C-beta3 with Shank2 regulates mGluR-mediated calcium signal.</title>
        <authorList>
            <person name="Hwang J.-I."/>
            <person name="Kim H.S."/>
            <person name="Lee J.R."/>
            <person name="Kim E."/>
            <person name="Ryu S.H."/>
            <person name="Suh P.-G."/>
        </authorList>
    </citation>
    <scope>INTERACTION WITH SHANK2</scope>
</reference>
<reference key="4">
    <citation type="journal article" date="2012" name="Nat. Commun.">
        <title>Quantitative maps of protein phosphorylation sites across 14 different rat organs and tissues.</title>
        <authorList>
            <person name="Lundby A."/>
            <person name="Secher A."/>
            <person name="Lage K."/>
            <person name="Nordsborg N.B."/>
            <person name="Dmytriyev A."/>
            <person name="Lundby C."/>
            <person name="Olsen J.V."/>
        </authorList>
    </citation>
    <scope>PHOSPHORYLATION [LARGE SCALE ANALYSIS] AT SER-535 AND SER-1105</scope>
    <scope>IDENTIFICATION BY MASS SPECTROMETRY [LARGE SCALE ANALYSIS]</scope>
</reference>
<proteinExistence type="evidence at protein level"/>
<name>PLCB3_RAT</name>
<comment type="function">
    <text evidence="1 2 8">Catalyzes the production of the second messenger molecules diacylglycerol (DAG) and inositol 1,4,5-trisphosphate (IP3) (PubMed:8454637). Key transducer of G protein-coupled receptor signaling: activated by G(q)/G(11) G alpha proteins downstream of G protein-coupled receptors activation (By similarity). In neutrophils, participates in a phospholipase C-activating N-formyl peptide-activated GPCR (G protein-coupled receptor) signaling pathway by promoting RASGRP4 activation by DAG, to promote neutrophil functional responses (By similarity).</text>
</comment>
<comment type="catalytic activity">
    <reaction evidence="8">
        <text>a 1,2-diacyl-sn-glycero-3-phospho-(1D-myo-inositol-4,5-bisphosphate) + H2O = 1D-myo-inositol 1,4,5-trisphosphate + a 1,2-diacyl-sn-glycerol + H(+)</text>
        <dbReference type="Rhea" id="RHEA:33179"/>
        <dbReference type="ChEBI" id="CHEBI:15377"/>
        <dbReference type="ChEBI" id="CHEBI:15378"/>
        <dbReference type="ChEBI" id="CHEBI:17815"/>
        <dbReference type="ChEBI" id="CHEBI:58456"/>
        <dbReference type="ChEBI" id="CHEBI:203600"/>
        <dbReference type="EC" id="3.1.4.11"/>
    </reaction>
    <physiologicalReaction direction="left-to-right" evidence="10">
        <dbReference type="Rhea" id="RHEA:33180"/>
    </physiologicalReaction>
</comment>
<comment type="catalytic activity">
    <reaction evidence="8">
        <text>a 1,2-diacyl-sn-glycero-3-phospho-(1D-myo-inositol) + H2O = 1D-myo-inositol 1-phosphate + a 1,2-diacyl-sn-glycerol + H(+)</text>
        <dbReference type="Rhea" id="RHEA:43484"/>
        <dbReference type="ChEBI" id="CHEBI:15377"/>
        <dbReference type="ChEBI" id="CHEBI:15378"/>
        <dbReference type="ChEBI" id="CHEBI:17815"/>
        <dbReference type="ChEBI" id="CHEBI:57880"/>
        <dbReference type="ChEBI" id="CHEBI:58433"/>
    </reaction>
    <physiologicalReaction direction="left-to-right" evidence="10">
        <dbReference type="Rhea" id="RHEA:43485"/>
    </physiologicalReaction>
</comment>
<comment type="cofactor">
    <cofactor evidence="8">
        <name>Ca(2+)</name>
        <dbReference type="ChEBI" id="CHEBI:29108"/>
    </cofactor>
</comment>
<comment type="activity regulation">
    <text evidence="2">Activated by G(q)/G(11) G alpha proteins in response to ligand-binding to G protein-coupled receptors.</text>
</comment>
<comment type="subunit">
    <text evidence="2 7">Interacts with LPAR2 (By similarity). Interacts with SHANK2 (PubMed:15632121).</text>
</comment>
<comment type="interaction">
    <interactant intactId="EBI-36481538">
        <id>Q99JE6</id>
    </interactant>
    <interactant intactId="EBI-397902">
        <id>Q9QX74</id>
        <label>Shank2</label>
    </interactant>
    <organismsDiffer>false</organismsDiffer>
    <experiments>4</experiments>
</comment>
<comment type="subcellular location">
    <subcellularLocation>
        <location evidence="8">Cytoplasm</location>
    </subcellularLocation>
    <subcellularLocation>
        <location evidence="8">Membrane</location>
    </subcellularLocation>
    <subcellularLocation>
        <location evidence="1">Nucleus</location>
    </subcellularLocation>
    <text>And particulate fractions.</text>
</comment>
<comment type="tissue specificity">
    <text evidence="8">Expressed in parotid gland, brain, liver, uterus, lung, heart, adrenal gland, and ovary. Not detected in spleen, pancreas, intestine, thymus or kidney.</text>
</comment>
<gene>
    <name evidence="12" type="primary">Plcb3</name>
</gene>
<feature type="initiator methionine" description="Removed" evidence="2">
    <location>
        <position position="1"/>
    </location>
</feature>
<feature type="chain" id="PRO_0000088493" description="1-phosphatidylinositol 4,5-bisphosphate phosphodiesterase beta-3">
    <location>
        <begin position="2"/>
        <end position="1234"/>
    </location>
</feature>
<feature type="domain" description="PI-PLC X-box" evidence="4">
    <location>
        <begin position="315"/>
        <end position="466"/>
    </location>
</feature>
<feature type="domain" description="PI-PLC Y-box" evidence="5">
    <location>
        <begin position="589"/>
        <end position="705"/>
    </location>
</feature>
<feature type="domain" description="C2" evidence="3">
    <location>
        <begin position="706"/>
        <end position="834"/>
    </location>
</feature>
<feature type="region of interest" description="Disordered" evidence="6">
    <location>
        <begin position="465"/>
        <end position="586"/>
    </location>
</feature>
<feature type="region of interest" description="Disordered" evidence="6">
    <location>
        <begin position="886"/>
        <end position="936"/>
    </location>
</feature>
<feature type="region of interest" description="Disordered" evidence="6">
    <location>
        <begin position="1196"/>
        <end position="1234"/>
    </location>
</feature>
<feature type="region of interest" description="Interaction with SHANK2" evidence="7">
    <location>
        <begin position="1231"/>
        <end position="1234"/>
    </location>
</feature>
<feature type="compositionally biased region" description="Low complexity" evidence="6">
    <location>
        <begin position="486"/>
        <end position="513"/>
    </location>
</feature>
<feature type="compositionally biased region" description="Acidic residues" evidence="6">
    <location>
        <begin position="554"/>
        <end position="566"/>
    </location>
</feature>
<feature type="compositionally biased region" description="Polar residues" evidence="6">
    <location>
        <begin position="577"/>
        <end position="586"/>
    </location>
</feature>
<feature type="compositionally biased region" description="Polar residues" evidence="6">
    <location>
        <begin position="886"/>
        <end position="907"/>
    </location>
</feature>
<feature type="compositionally biased region" description="Low complexity" evidence="6">
    <location>
        <begin position="924"/>
        <end position="934"/>
    </location>
</feature>
<feature type="active site" evidence="4">
    <location>
        <position position="330"/>
    </location>
</feature>
<feature type="active site" evidence="4">
    <location>
        <position position="377"/>
    </location>
</feature>
<feature type="modified residue" description="N-acetylalanine" evidence="2">
    <location>
        <position position="2"/>
    </location>
</feature>
<feature type="modified residue" description="Phosphoserine" evidence="2">
    <location>
        <position position="472"/>
    </location>
</feature>
<feature type="modified residue" description="Phosphoserine" evidence="2">
    <location>
        <position position="488"/>
    </location>
</feature>
<feature type="modified residue" description="Phosphoserine" evidence="2">
    <location>
        <position position="493"/>
    </location>
</feature>
<feature type="modified residue" description="Phosphoserine" evidence="13">
    <location>
        <position position="535"/>
    </location>
</feature>
<feature type="modified residue" description="Phosphoserine" evidence="2">
    <location>
        <position position="925"/>
    </location>
</feature>
<feature type="modified residue" description="Phosphoserine" evidence="13">
    <location>
        <position position="1105"/>
    </location>
</feature>
<feature type="sequence conflict" description="In Ref. 2; AAK14906." evidence="9" ref="2">
    <original>T</original>
    <variation>A</variation>
    <location>
        <position position="17"/>
    </location>
</feature>
<organism evidence="11">
    <name type="scientific">Rattus norvegicus</name>
    <name type="common">Rat</name>
    <dbReference type="NCBI Taxonomy" id="10116"/>
    <lineage>
        <taxon>Eukaryota</taxon>
        <taxon>Metazoa</taxon>
        <taxon>Chordata</taxon>
        <taxon>Craniata</taxon>
        <taxon>Vertebrata</taxon>
        <taxon>Euteleostomi</taxon>
        <taxon>Mammalia</taxon>
        <taxon>Eutheria</taxon>
        <taxon>Euarchontoglires</taxon>
        <taxon>Glires</taxon>
        <taxon>Rodentia</taxon>
        <taxon>Myomorpha</taxon>
        <taxon>Muroidea</taxon>
        <taxon>Muridae</taxon>
        <taxon>Murinae</taxon>
        <taxon>Rattus</taxon>
    </lineage>
</organism>
<sequence>MAGARPGVHALQLEPPTVVETLRRGSKFIKWDEEASSRNLVTLRLDPNGFFLYWTGPNMEVDTLDISSIRDTRTGRYARLPKDPKIREVLGFGGPDTRLEEKLMTVVAGPDPVNTTFLNFMAVQDDTVKVWSEELFKLAMNILAQNAPEHVLRKAYTKLKLQVNQDGRIPVKNILKMFSADKKRVETALICGLNFNRSESIRPDEFSLEIFERFLNKLLLRPDIDKILLEIGAKGKPYLTLEQLMDFINQKQRDPRLNEVLYPPLRSSQARLLIEKYEPNKQFLERDQMSMEGFSRYLGGEENGILPLEALDLSMDMTQPLSAYFINSSHNTYLTAGQLAGTSSVEMYRQALLWGCRCVELDVWKGRPPEEEPFITHGFTMTTEVPLRDVLEAIAETAFKTSPYPVILSFENHVDSAKQQAKMAEYCRSIFGEALLIDPLDKYPLSAGTPLPSPQDLMGRILVKNKKRHRPSTGVPDSSVAKRPLEQSNSALSESSAATEPSSPQLGSPSSDSCPGLSNGEEVGLEKTSLEPQKSLGEEGLNRGPNVLMPDRDREDEEEDEEEEETTDPKKPTTDEGTASSEVNATEEMSTLVNYVEPVKFKSFEASRKRNKCFEMSSFVETKAMEQLTKSPMEFVEYNKQQLSRIYPKGTRVDSSNYMPQLFWNVGCQLVALNFQTLDLPMQLNAGVFEYNGRSGYLLKPEFMRRPDKSFDPFTEVIVDGIVANALRVKVISGQFLSDRKVGIYVEVDMFGLPVDTRRKYRTRTSQGNSFNPVWDEEPFDFPKVVLPTLASLRIAAFEEGGRFVGHRILPVSAIRSGYHYVCLRNEANQPLCLPALLIYTEASDYIPDDHQDYAEALINPIKHVSLMDQRAKQLAALIGESEAQASTEMCQETPSQQQGSQLSSNPVPNPLDDSPRWPPGPTTSPTSTSLSSPGQRDDLIASILSEVTPTPLEELRSHKAMVKLRSRQDRDLRELHKKHQRKAVALTRRLLDGLAQARAEGKCRPSSSALSRATNVEDVKEEEKEAARQYREFQNRQVQSLLELREAQADAETERRLEHLKQAQQRLREVVLDAHTTQFKRLKELNEREKKELQKILDRKRNNSISEAKTREKHKKEVELTEINRRHITESVNSIRRLEEAQKQRHERLLAGQQQVLQQLVEEEPKLVAQLTQECQEQRERLPQEIRRCLLGETSEGLGDGPLVACASNGHAAGSGGHQSGADSESQEENTQL</sequence>
<protein>
    <recommendedName>
        <fullName evidence="9">1-phosphatidylinositol 4,5-bisphosphate phosphodiesterase beta-3</fullName>
        <ecNumber evidence="8">3.1.4.11</ecNumber>
    </recommendedName>
    <alternativeName>
        <fullName>Phosphoinositide phospholipase C-beta-3</fullName>
    </alternativeName>
    <alternativeName>
        <fullName>Phospholipase C-beta-3</fullName>
        <shortName>PLC-beta-3</shortName>
    </alternativeName>
</protein>
<dbReference type="EC" id="3.1.4.11" evidence="8"/>
<dbReference type="EMBL" id="U41411">
    <property type="protein sequence ID" value="AAC53366.1"/>
    <property type="molecule type" value="Genomic_DNA"/>
</dbReference>
<dbReference type="EMBL" id="M99567">
    <property type="protein sequence ID" value="AAK14906.1"/>
    <property type="molecule type" value="mRNA"/>
</dbReference>
<dbReference type="PIR" id="A45493">
    <property type="entry name" value="A45493"/>
</dbReference>
<dbReference type="SMR" id="Q99JE6"/>
<dbReference type="FunCoup" id="Q99JE6">
    <property type="interactions" value="999"/>
</dbReference>
<dbReference type="IntAct" id="Q99JE6">
    <property type="interactions" value="1"/>
</dbReference>
<dbReference type="MINT" id="Q99JE6"/>
<dbReference type="STRING" id="10116.ENSRNOP00000028720"/>
<dbReference type="SwissLipids" id="SLP:000000945"/>
<dbReference type="GlyGen" id="Q99JE6">
    <property type="glycosylation" value="1 site"/>
</dbReference>
<dbReference type="iPTMnet" id="Q99JE6"/>
<dbReference type="PhosphoSitePlus" id="Q99JE6"/>
<dbReference type="jPOST" id="Q99JE6"/>
<dbReference type="PaxDb" id="10116-ENSRNOP00000028720"/>
<dbReference type="PeptideAtlas" id="Q99JE6"/>
<dbReference type="UCSC" id="RGD:61993">
    <property type="organism name" value="rat"/>
</dbReference>
<dbReference type="AGR" id="RGD:61993"/>
<dbReference type="RGD" id="61993">
    <property type="gene designation" value="Plcb3"/>
</dbReference>
<dbReference type="eggNOG" id="KOG1265">
    <property type="taxonomic scope" value="Eukaryota"/>
</dbReference>
<dbReference type="InParanoid" id="Q99JE6"/>
<dbReference type="BRENDA" id="3.1.4.11">
    <property type="organism ID" value="5301"/>
</dbReference>
<dbReference type="Reactome" id="R-RNO-112043">
    <property type="pathway name" value="PLC beta mediated events"/>
</dbReference>
<dbReference type="Reactome" id="R-RNO-1855204">
    <property type="pathway name" value="Synthesis of IP3 and IP4 in the cytosol"/>
</dbReference>
<dbReference type="Reactome" id="R-RNO-399997">
    <property type="pathway name" value="Acetylcholine regulates insulin secretion"/>
</dbReference>
<dbReference type="Reactome" id="R-RNO-416476">
    <property type="pathway name" value="G alpha (q) signalling events"/>
</dbReference>
<dbReference type="Reactome" id="R-RNO-434316">
    <property type="pathway name" value="Fatty Acids bound to GPR40 (FFAR1) regulate insulin secretion"/>
</dbReference>
<dbReference type="PRO" id="PR:Q99JE6"/>
<dbReference type="Proteomes" id="UP000002494">
    <property type="component" value="Unplaced"/>
</dbReference>
<dbReference type="GO" id="GO:0005737">
    <property type="term" value="C:cytoplasm"/>
    <property type="evidence" value="ECO:0000266"/>
    <property type="project" value="RGD"/>
</dbReference>
<dbReference type="GO" id="GO:0005829">
    <property type="term" value="C:cytosol"/>
    <property type="evidence" value="ECO:0000314"/>
    <property type="project" value="UniProtKB"/>
</dbReference>
<dbReference type="GO" id="GO:0005634">
    <property type="term" value="C:nucleus"/>
    <property type="evidence" value="ECO:0007669"/>
    <property type="project" value="UniProtKB-SubCell"/>
</dbReference>
<dbReference type="GO" id="GO:0099524">
    <property type="term" value="C:postsynaptic cytosol"/>
    <property type="evidence" value="ECO:0000266"/>
    <property type="project" value="RGD"/>
</dbReference>
<dbReference type="GO" id="GO:0032991">
    <property type="term" value="C:protein-containing complex"/>
    <property type="evidence" value="ECO:0000266"/>
    <property type="project" value="RGD"/>
</dbReference>
<dbReference type="GO" id="GO:0042383">
    <property type="term" value="C:sarcolemma"/>
    <property type="evidence" value="ECO:0000314"/>
    <property type="project" value="RGD"/>
</dbReference>
<dbReference type="GO" id="GO:0005509">
    <property type="term" value="F:calcium ion binding"/>
    <property type="evidence" value="ECO:0007669"/>
    <property type="project" value="InterPro"/>
</dbReference>
<dbReference type="GO" id="GO:0005516">
    <property type="term" value="F:calmodulin binding"/>
    <property type="evidence" value="ECO:0000266"/>
    <property type="project" value="RGD"/>
</dbReference>
<dbReference type="GO" id="GO:0060090">
    <property type="term" value="F:molecular adaptor activity"/>
    <property type="evidence" value="ECO:0000266"/>
    <property type="project" value="RGD"/>
</dbReference>
<dbReference type="GO" id="GO:0140677">
    <property type="term" value="F:molecular function activator activity"/>
    <property type="evidence" value="ECO:0000266"/>
    <property type="project" value="RGD"/>
</dbReference>
<dbReference type="GO" id="GO:0004435">
    <property type="term" value="F:phosphatidylinositol-4,5-bisphosphate phospholipase C activity"/>
    <property type="evidence" value="ECO:0000314"/>
    <property type="project" value="UniProtKB"/>
</dbReference>
<dbReference type="GO" id="GO:0004629">
    <property type="term" value="F:phospholipase C activity"/>
    <property type="evidence" value="ECO:0000304"/>
    <property type="project" value="RGD"/>
</dbReference>
<dbReference type="GO" id="GO:0007186">
    <property type="term" value="P:G protein-coupled receptor signaling pathway"/>
    <property type="evidence" value="ECO:0000315"/>
    <property type="project" value="RGD"/>
</dbReference>
<dbReference type="GO" id="GO:0032957">
    <property type="term" value="P:inositol trisphosphate metabolic process"/>
    <property type="evidence" value="ECO:0000314"/>
    <property type="project" value="RGD"/>
</dbReference>
<dbReference type="GO" id="GO:0031161">
    <property type="term" value="P:phosphatidylinositol catabolic process"/>
    <property type="evidence" value="ECO:0000314"/>
    <property type="project" value="RGD"/>
</dbReference>
<dbReference type="GO" id="GO:0046488">
    <property type="term" value="P:phosphatidylinositol metabolic process"/>
    <property type="evidence" value="ECO:0000266"/>
    <property type="project" value="RGD"/>
</dbReference>
<dbReference type="GO" id="GO:0048015">
    <property type="term" value="P:phosphatidylinositol-mediated signaling"/>
    <property type="evidence" value="ECO:0000318"/>
    <property type="project" value="GO_Central"/>
</dbReference>
<dbReference type="GO" id="GO:0007200">
    <property type="term" value="P:phospholipase C-activating G protein-coupled receptor signaling pathway"/>
    <property type="evidence" value="ECO:0000250"/>
    <property type="project" value="UniProtKB"/>
</dbReference>
<dbReference type="GO" id="GO:0007208">
    <property type="term" value="P:phospholipase C-activating serotonin receptor signaling pathway"/>
    <property type="evidence" value="ECO:0000266"/>
    <property type="project" value="RGD"/>
</dbReference>
<dbReference type="GO" id="GO:0006892">
    <property type="term" value="P:post-Golgi vesicle-mediated transport"/>
    <property type="evidence" value="ECO:0000314"/>
    <property type="project" value="RGD"/>
</dbReference>
<dbReference type="GO" id="GO:0003073">
    <property type="term" value="P:regulation of systemic arterial blood pressure"/>
    <property type="evidence" value="ECO:0000266"/>
    <property type="project" value="RGD"/>
</dbReference>
<dbReference type="GO" id="GO:0051209">
    <property type="term" value="P:release of sequestered calcium ion into cytosol"/>
    <property type="evidence" value="ECO:0000318"/>
    <property type="project" value="GO_Central"/>
</dbReference>
<dbReference type="CDD" id="cd00275">
    <property type="entry name" value="C2_PLC_like"/>
    <property type="match status" value="1"/>
</dbReference>
<dbReference type="CDD" id="cd16210">
    <property type="entry name" value="EFh_PI-PLCbeta3"/>
    <property type="match status" value="1"/>
</dbReference>
<dbReference type="CDD" id="cd13361">
    <property type="entry name" value="PH_PLC_beta"/>
    <property type="match status" value="1"/>
</dbReference>
<dbReference type="CDD" id="cd08591">
    <property type="entry name" value="PI-PLCc_beta"/>
    <property type="match status" value="1"/>
</dbReference>
<dbReference type="FunFam" id="1.10.238.10:FF:000048">
    <property type="entry name" value="1-phosphatidylinositol 4,5-bisphosphate phosphodiesterase"/>
    <property type="match status" value="1"/>
</dbReference>
<dbReference type="FunFam" id="1.20.1230.10:FF:000003">
    <property type="entry name" value="1-phosphatidylinositol 4,5-bisphosphate phosphodiesterase"/>
    <property type="match status" value="1"/>
</dbReference>
<dbReference type="FunFam" id="2.30.29.240:FF:000005">
    <property type="entry name" value="1-phosphatidylinositol 4,5-bisphosphate phosphodiesterase"/>
    <property type="match status" value="1"/>
</dbReference>
<dbReference type="FunFam" id="2.60.40.150:FF:000008">
    <property type="entry name" value="1-phosphatidylinositol 4,5-bisphosphate phosphodiesterase"/>
    <property type="match status" value="1"/>
</dbReference>
<dbReference type="Gene3D" id="2.30.29.240">
    <property type="match status" value="1"/>
</dbReference>
<dbReference type="Gene3D" id="2.60.40.150">
    <property type="entry name" value="C2 domain"/>
    <property type="match status" value="1"/>
</dbReference>
<dbReference type="Gene3D" id="1.10.238.10">
    <property type="entry name" value="EF-hand"/>
    <property type="match status" value="1"/>
</dbReference>
<dbReference type="Gene3D" id="3.20.20.190">
    <property type="entry name" value="Phosphatidylinositol (PI) phosphodiesterase"/>
    <property type="match status" value="1"/>
</dbReference>
<dbReference type="Gene3D" id="1.20.1230.10">
    <property type="entry name" value="Phospholipase C beta, distal C-terminal domain"/>
    <property type="match status" value="1"/>
</dbReference>
<dbReference type="InterPro" id="IPR000008">
    <property type="entry name" value="C2_dom"/>
</dbReference>
<dbReference type="InterPro" id="IPR035892">
    <property type="entry name" value="C2_domain_sf"/>
</dbReference>
<dbReference type="InterPro" id="IPR011992">
    <property type="entry name" value="EF-hand-dom_pair"/>
</dbReference>
<dbReference type="InterPro" id="IPR001192">
    <property type="entry name" value="PI-PLC_fam"/>
</dbReference>
<dbReference type="InterPro" id="IPR016280">
    <property type="entry name" value="PLC-beta"/>
</dbReference>
<dbReference type="InterPro" id="IPR014815">
    <property type="entry name" value="PLC-beta_C"/>
</dbReference>
<dbReference type="InterPro" id="IPR042531">
    <property type="entry name" value="PLC-beta_C_sf"/>
</dbReference>
<dbReference type="InterPro" id="IPR037862">
    <property type="entry name" value="PLC-beta_PH"/>
</dbReference>
<dbReference type="InterPro" id="IPR017946">
    <property type="entry name" value="PLC-like_Pdiesterase_TIM-brl"/>
</dbReference>
<dbReference type="InterPro" id="IPR053945">
    <property type="entry name" value="PLCB1-4-like_EFh"/>
</dbReference>
<dbReference type="InterPro" id="IPR000909">
    <property type="entry name" value="PLipase_C_PInositol-sp_X_dom"/>
</dbReference>
<dbReference type="InterPro" id="IPR001711">
    <property type="entry name" value="PLipase_C_Pinositol-sp_Y"/>
</dbReference>
<dbReference type="PANTHER" id="PTHR10336:SF11">
    <property type="entry name" value="1-PHOSPHATIDYLINOSITOL 4,5-BISPHOSPHATE PHOSPHODIESTERASE BETA-3"/>
    <property type="match status" value="1"/>
</dbReference>
<dbReference type="PANTHER" id="PTHR10336">
    <property type="entry name" value="PHOSPHOINOSITIDE-SPECIFIC PHOSPHOLIPASE C FAMILY PROTEIN"/>
    <property type="match status" value="1"/>
</dbReference>
<dbReference type="Pfam" id="PF00168">
    <property type="entry name" value="C2"/>
    <property type="match status" value="1"/>
</dbReference>
<dbReference type="Pfam" id="PF17787">
    <property type="entry name" value="PH_14"/>
    <property type="match status" value="1"/>
</dbReference>
<dbReference type="Pfam" id="PF00388">
    <property type="entry name" value="PI-PLC-X"/>
    <property type="match status" value="1"/>
</dbReference>
<dbReference type="Pfam" id="PF00387">
    <property type="entry name" value="PI-PLC-Y"/>
    <property type="match status" value="1"/>
</dbReference>
<dbReference type="Pfam" id="PF08703">
    <property type="entry name" value="PLC-beta_C"/>
    <property type="match status" value="1"/>
</dbReference>
<dbReference type="Pfam" id="PF22631">
    <property type="entry name" value="PLCB1-4-like_EFh"/>
    <property type="match status" value="1"/>
</dbReference>
<dbReference type="PIRSF" id="PIRSF000956">
    <property type="entry name" value="PLC-beta"/>
    <property type="match status" value="1"/>
</dbReference>
<dbReference type="PRINTS" id="PR00390">
    <property type="entry name" value="PHPHLIPASEC"/>
</dbReference>
<dbReference type="SMART" id="SM00239">
    <property type="entry name" value="C2"/>
    <property type="match status" value="1"/>
</dbReference>
<dbReference type="SMART" id="SM00148">
    <property type="entry name" value="PLCXc"/>
    <property type="match status" value="1"/>
</dbReference>
<dbReference type="SMART" id="SM00149">
    <property type="entry name" value="PLCYc"/>
    <property type="match status" value="1"/>
</dbReference>
<dbReference type="SUPFAM" id="SSF69989">
    <property type="entry name" value="C-terminal domain of PLC-beta"/>
    <property type="match status" value="1"/>
</dbReference>
<dbReference type="SUPFAM" id="SSF49562">
    <property type="entry name" value="C2 domain (Calcium/lipid-binding domain, CaLB)"/>
    <property type="match status" value="1"/>
</dbReference>
<dbReference type="SUPFAM" id="SSF47473">
    <property type="entry name" value="EF-hand"/>
    <property type="match status" value="1"/>
</dbReference>
<dbReference type="SUPFAM" id="SSF50729">
    <property type="entry name" value="PH domain-like"/>
    <property type="match status" value="1"/>
</dbReference>
<dbReference type="SUPFAM" id="SSF51695">
    <property type="entry name" value="PLC-like phosphodiesterases"/>
    <property type="match status" value="1"/>
</dbReference>
<dbReference type="PROSITE" id="PS50004">
    <property type="entry name" value="C2"/>
    <property type="match status" value="1"/>
</dbReference>
<dbReference type="PROSITE" id="PS50007">
    <property type="entry name" value="PIPLC_X_DOMAIN"/>
    <property type="match status" value="1"/>
</dbReference>
<dbReference type="PROSITE" id="PS50008">
    <property type="entry name" value="PIPLC_Y_DOMAIN"/>
    <property type="match status" value="1"/>
</dbReference>
<keyword id="KW-0007">Acetylation</keyword>
<keyword id="KW-0106">Calcium</keyword>
<keyword id="KW-0963">Cytoplasm</keyword>
<keyword id="KW-0378">Hydrolase</keyword>
<keyword id="KW-0442">Lipid degradation</keyword>
<keyword id="KW-0443">Lipid metabolism</keyword>
<keyword id="KW-0472">Membrane</keyword>
<keyword id="KW-0539">Nucleus</keyword>
<keyword id="KW-0597">Phosphoprotein</keyword>
<keyword id="KW-1185">Reference proteome</keyword>
<keyword id="KW-0807">Transducer</keyword>
<accession>Q99JE6</accession>
<accession>Q62887</accession>
<accession>Q9QW29</accession>
<evidence type="ECO:0000250" key="1">
    <source>
        <dbReference type="UniProtKB" id="P51432"/>
    </source>
</evidence>
<evidence type="ECO:0000250" key="2">
    <source>
        <dbReference type="UniProtKB" id="Q01970"/>
    </source>
</evidence>
<evidence type="ECO:0000255" key="3">
    <source>
        <dbReference type="PROSITE-ProRule" id="PRU00041"/>
    </source>
</evidence>
<evidence type="ECO:0000255" key="4">
    <source>
        <dbReference type="PROSITE-ProRule" id="PRU00270"/>
    </source>
</evidence>
<evidence type="ECO:0000255" key="5">
    <source>
        <dbReference type="PROSITE-ProRule" id="PRU00271"/>
    </source>
</evidence>
<evidence type="ECO:0000256" key="6">
    <source>
        <dbReference type="SAM" id="MobiDB-lite"/>
    </source>
</evidence>
<evidence type="ECO:0000269" key="7">
    <source>
    </source>
</evidence>
<evidence type="ECO:0000269" key="8">
    <source>
    </source>
</evidence>
<evidence type="ECO:0000305" key="9"/>
<evidence type="ECO:0000305" key="10">
    <source>
    </source>
</evidence>
<evidence type="ECO:0000312" key="11">
    <source>
        <dbReference type="EMBL" id="AAK14906.1"/>
    </source>
</evidence>
<evidence type="ECO:0000312" key="12">
    <source>
        <dbReference type="RGD" id="61993"/>
    </source>
</evidence>
<evidence type="ECO:0007744" key="13">
    <source>
    </source>
</evidence>